<proteinExistence type="inferred from homology"/>
<protein>
    <recommendedName>
        <fullName evidence="1">Oxygen-dependent choline dehydrogenase</fullName>
        <shortName evidence="1">CDH</shortName>
        <shortName evidence="1">CHD</shortName>
        <ecNumber evidence="1">1.1.99.1</ecNumber>
    </recommendedName>
    <alternativeName>
        <fullName evidence="1">Betaine aldehyde dehydrogenase</fullName>
        <shortName evidence="1">BADH</shortName>
        <ecNumber evidence="1">1.2.1.8</ecNumber>
    </alternativeName>
</protein>
<accession>Q3BXK8</accession>
<name>BETA_XANE5</name>
<feature type="chain" id="PRO_0000258938" description="Oxygen-dependent choline dehydrogenase">
    <location>
        <begin position="1"/>
        <end position="556"/>
    </location>
</feature>
<feature type="active site" description="Proton acceptor" evidence="1">
    <location>
        <position position="475"/>
    </location>
</feature>
<feature type="binding site" evidence="1">
    <location>
        <begin position="6"/>
        <end position="35"/>
    </location>
    <ligand>
        <name>FAD</name>
        <dbReference type="ChEBI" id="CHEBI:57692"/>
    </ligand>
</feature>
<dbReference type="EC" id="1.1.99.1" evidence="1"/>
<dbReference type="EC" id="1.2.1.8" evidence="1"/>
<dbReference type="EMBL" id="AM039952">
    <property type="protein sequence ID" value="CAJ22405.1"/>
    <property type="molecule type" value="Genomic_DNA"/>
</dbReference>
<dbReference type="RefSeq" id="WP_011346382.1">
    <property type="nucleotide sequence ID" value="NZ_CP017190.1"/>
</dbReference>
<dbReference type="SMR" id="Q3BXK8"/>
<dbReference type="STRING" id="456327.BJD11_18945"/>
<dbReference type="CAZy" id="AA3">
    <property type="family name" value="Auxiliary Activities 3"/>
</dbReference>
<dbReference type="GeneID" id="97509107"/>
<dbReference type="KEGG" id="xcv:XCV0774"/>
<dbReference type="eggNOG" id="COG2303">
    <property type="taxonomic scope" value="Bacteria"/>
</dbReference>
<dbReference type="HOGENOM" id="CLU_002865_7_1_6"/>
<dbReference type="UniPathway" id="UPA00529">
    <property type="reaction ID" value="UER00385"/>
</dbReference>
<dbReference type="Proteomes" id="UP000007069">
    <property type="component" value="Chromosome"/>
</dbReference>
<dbReference type="GO" id="GO:0016020">
    <property type="term" value="C:membrane"/>
    <property type="evidence" value="ECO:0007669"/>
    <property type="project" value="TreeGrafter"/>
</dbReference>
<dbReference type="GO" id="GO:0008802">
    <property type="term" value="F:betaine-aldehyde dehydrogenase (NAD+) activity"/>
    <property type="evidence" value="ECO:0007669"/>
    <property type="project" value="UniProtKB-EC"/>
</dbReference>
<dbReference type="GO" id="GO:0008812">
    <property type="term" value="F:choline dehydrogenase activity"/>
    <property type="evidence" value="ECO:0007669"/>
    <property type="project" value="UniProtKB-UniRule"/>
</dbReference>
<dbReference type="GO" id="GO:0050660">
    <property type="term" value="F:flavin adenine dinucleotide binding"/>
    <property type="evidence" value="ECO:0007669"/>
    <property type="project" value="InterPro"/>
</dbReference>
<dbReference type="GO" id="GO:0019285">
    <property type="term" value="P:glycine betaine biosynthetic process from choline"/>
    <property type="evidence" value="ECO:0007669"/>
    <property type="project" value="UniProtKB-UniRule"/>
</dbReference>
<dbReference type="Gene3D" id="3.50.50.60">
    <property type="entry name" value="FAD/NAD(P)-binding domain"/>
    <property type="match status" value="1"/>
</dbReference>
<dbReference type="Gene3D" id="3.30.560.10">
    <property type="entry name" value="Glucose Oxidase, domain 3"/>
    <property type="match status" value="1"/>
</dbReference>
<dbReference type="HAMAP" id="MF_00750">
    <property type="entry name" value="Choline_dehydrogen"/>
    <property type="match status" value="1"/>
</dbReference>
<dbReference type="InterPro" id="IPR011533">
    <property type="entry name" value="BetA"/>
</dbReference>
<dbReference type="InterPro" id="IPR036188">
    <property type="entry name" value="FAD/NAD-bd_sf"/>
</dbReference>
<dbReference type="InterPro" id="IPR012132">
    <property type="entry name" value="GMC_OxRdtase"/>
</dbReference>
<dbReference type="InterPro" id="IPR000172">
    <property type="entry name" value="GMC_OxRdtase_N"/>
</dbReference>
<dbReference type="InterPro" id="IPR007867">
    <property type="entry name" value="GMC_OxRtase_C"/>
</dbReference>
<dbReference type="NCBIfam" id="TIGR01810">
    <property type="entry name" value="betA"/>
    <property type="match status" value="1"/>
</dbReference>
<dbReference type="NCBIfam" id="NF002550">
    <property type="entry name" value="PRK02106.1"/>
    <property type="match status" value="1"/>
</dbReference>
<dbReference type="PANTHER" id="PTHR11552:SF147">
    <property type="entry name" value="CHOLINE DEHYDROGENASE, MITOCHONDRIAL"/>
    <property type="match status" value="1"/>
</dbReference>
<dbReference type="PANTHER" id="PTHR11552">
    <property type="entry name" value="GLUCOSE-METHANOL-CHOLINE GMC OXIDOREDUCTASE"/>
    <property type="match status" value="1"/>
</dbReference>
<dbReference type="Pfam" id="PF05199">
    <property type="entry name" value="GMC_oxred_C"/>
    <property type="match status" value="1"/>
</dbReference>
<dbReference type="Pfam" id="PF00732">
    <property type="entry name" value="GMC_oxred_N"/>
    <property type="match status" value="1"/>
</dbReference>
<dbReference type="PIRSF" id="PIRSF000137">
    <property type="entry name" value="Alcohol_oxidase"/>
    <property type="match status" value="1"/>
</dbReference>
<dbReference type="SUPFAM" id="SSF54373">
    <property type="entry name" value="FAD-linked reductases, C-terminal domain"/>
    <property type="match status" value="1"/>
</dbReference>
<dbReference type="SUPFAM" id="SSF51905">
    <property type="entry name" value="FAD/NAD(P)-binding domain"/>
    <property type="match status" value="1"/>
</dbReference>
<dbReference type="PROSITE" id="PS00623">
    <property type="entry name" value="GMC_OXRED_1"/>
    <property type="match status" value="1"/>
</dbReference>
<dbReference type="PROSITE" id="PS00624">
    <property type="entry name" value="GMC_OXRED_2"/>
    <property type="match status" value="1"/>
</dbReference>
<reference key="1">
    <citation type="journal article" date="2005" name="J. Bacteriol.">
        <title>Insights into genome plasticity and pathogenicity of the plant pathogenic Bacterium Xanthomonas campestris pv. vesicatoria revealed by the complete genome sequence.</title>
        <authorList>
            <person name="Thieme F."/>
            <person name="Koebnik R."/>
            <person name="Bekel T."/>
            <person name="Berger C."/>
            <person name="Boch J."/>
            <person name="Buettner D."/>
            <person name="Caldana C."/>
            <person name="Gaigalat L."/>
            <person name="Goesmann A."/>
            <person name="Kay S."/>
            <person name="Kirchner O."/>
            <person name="Lanz C."/>
            <person name="Linke B."/>
            <person name="McHardy A.C."/>
            <person name="Meyer F."/>
            <person name="Mittenhuber G."/>
            <person name="Nies D.H."/>
            <person name="Niesbach-Kloesgen U."/>
            <person name="Patschkowski T."/>
            <person name="Rueckert C."/>
            <person name="Rupp O."/>
            <person name="Schneiker S."/>
            <person name="Schuster S.C."/>
            <person name="Vorhoelter F.J."/>
            <person name="Weber E."/>
            <person name="Puehler A."/>
            <person name="Bonas U."/>
            <person name="Bartels D."/>
            <person name="Kaiser O."/>
        </authorList>
    </citation>
    <scope>NUCLEOTIDE SEQUENCE [LARGE SCALE GENOMIC DNA]</scope>
    <source>
        <strain>85-10</strain>
    </source>
</reference>
<sequence>MQREYDYIIIGAGSAGNVLAARLTEDPGVTVLLLEAGGPDYRLDFRTQMPAALAFPLQGRRYNWAYETEPEPYMDNRRMECGRGKGLGGSSLINGMCYIRGNALDFDHWAKRPGLEDWSYRDVLPYFRKAETRDIGANDYHGGDGPVSVATPKNDNNVLFHAMVEAGVQAGYPRTDDLNGYQQEGFGPMDRTVTPRGRRASTARGYLDMAKPRDGLHIVTHATTDRILFAGKRAIGVHYLVGNSSEGIDAHARREVLVCAGAIASPQLLQRSGVGAPDLLRALDVQLVHDLPGVGQNLQDHLEVYIQYACTKPVSLYPALQWWNQPAIGAEWLFAGTGTGASNQFEAGGFIRTREEFDWPNIQYHFLPVAINYNGSNAVKEHGFQAHVGSMRTPSRGRVHAKSRDPRQHPSILFNYQSTDQDWQEFRDAIRITREIIAQPALDPYRGREISPSADCKTDAELDAFVRSRAETAYHPSCSCAMGTDDMAVVDGQGRVHGMEGLRVIDASIMPRIITGNLNATTIMIAEKIADRMRGRPPLPRSTADYYIAGDAPVRG</sequence>
<evidence type="ECO:0000255" key="1">
    <source>
        <dbReference type="HAMAP-Rule" id="MF_00750"/>
    </source>
</evidence>
<organism>
    <name type="scientific">Xanthomonas euvesicatoria pv. vesicatoria (strain 85-10)</name>
    <name type="common">Xanthomonas campestris pv. vesicatoria</name>
    <dbReference type="NCBI Taxonomy" id="316273"/>
    <lineage>
        <taxon>Bacteria</taxon>
        <taxon>Pseudomonadati</taxon>
        <taxon>Pseudomonadota</taxon>
        <taxon>Gammaproteobacteria</taxon>
        <taxon>Lysobacterales</taxon>
        <taxon>Lysobacteraceae</taxon>
        <taxon>Xanthomonas</taxon>
    </lineage>
</organism>
<comment type="function">
    <text evidence="1">Involved in the biosynthesis of the osmoprotectant glycine betaine. Catalyzes the oxidation of choline to betaine aldehyde and betaine aldehyde to glycine betaine at the same rate.</text>
</comment>
<comment type="catalytic activity">
    <reaction evidence="1">
        <text>choline + A = betaine aldehyde + AH2</text>
        <dbReference type="Rhea" id="RHEA:17433"/>
        <dbReference type="ChEBI" id="CHEBI:13193"/>
        <dbReference type="ChEBI" id="CHEBI:15354"/>
        <dbReference type="ChEBI" id="CHEBI:15710"/>
        <dbReference type="ChEBI" id="CHEBI:17499"/>
        <dbReference type="EC" id="1.1.99.1"/>
    </reaction>
</comment>
<comment type="catalytic activity">
    <reaction evidence="1">
        <text>betaine aldehyde + NAD(+) + H2O = glycine betaine + NADH + 2 H(+)</text>
        <dbReference type="Rhea" id="RHEA:15305"/>
        <dbReference type="ChEBI" id="CHEBI:15377"/>
        <dbReference type="ChEBI" id="CHEBI:15378"/>
        <dbReference type="ChEBI" id="CHEBI:15710"/>
        <dbReference type="ChEBI" id="CHEBI:17750"/>
        <dbReference type="ChEBI" id="CHEBI:57540"/>
        <dbReference type="ChEBI" id="CHEBI:57945"/>
        <dbReference type="EC" id="1.2.1.8"/>
    </reaction>
</comment>
<comment type="cofactor">
    <cofactor evidence="1">
        <name>FAD</name>
        <dbReference type="ChEBI" id="CHEBI:57692"/>
    </cofactor>
</comment>
<comment type="pathway">
    <text evidence="1">Amine and polyamine biosynthesis; betaine biosynthesis via choline pathway; betaine aldehyde from choline (cytochrome c reductase route): step 1/1.</text>
</comment>
<comment type="similarity">
    <text evidence="1">Belongs to the GMC oxidoreductase family.</text>
</comment>
<keyword id="KW-0274">FAD</keyword>
<keyword id="KW-0285">Flavoprotein</keyword>
<keyword id="KW-0520">NAD</keyword>
<keyword id="KW-0560">Oxidoreductase</keyword>
<gene>
    <name evidence="1" type="primary">betA</name>
    <name type="ordered locus">XCV0774</name>
</gene>